<proteinExistence type="inferred from homology"/>
<name>TSR3_THEVO</name>
<sequence length="164" mass="18707">MTGIYYLYLRQDDPKKATMRKLERFGLAKRVDIKGVGLKLVLTPYADIFLSREDAVLYEKYGLCVIEGSWNKIDSIKSLKFRIERRLPALLAANPVNYGKIGILSSVEATAAALYIIGYWDTAYALLSKFSWGLNFIKLNENPLNEYSTADRSEIKKIEESYFG</sequence>
<evidence type="ECO:0000250" key="1">
    <source>
        <dbReference type="UniProtKB" id="E1QU22"/>
    </source>
</evidence>
<evidence type="ECO:0000255" key="2">
    <source>
        <dbReference type="HAMAP-Rule" id="MF_01116"/>
    </source>
</evidence>
<evidence type="ECO:0000305" key="3"/>
<dbReference type="EC" id="2.5.1.157" evidence="2"/>
<dbReference type="EMBL" id="BA000011">
    <property type="protein sequence ID" value="BAB59217.1"/>
    <property type="molecule type" value="Genomic_DNA"/>
</dbReference>
<dbReference type="RefSeq" id="WP_010916332.1">
    <property type="nucleotide sequence ID" value="NC_002689.2"/>
</dbReference>
<dbReference type="SMR" id="Q97CM6"/>
<dbReference type="STRING" id="273116.gene:9380841"/>
<dbReference type="PaxDb" id="273116-14324289"/>
<dbReference type="GeneID" id="1441562"/>
<dbReference type="KEGG" id="tvo:TVG0075867"/>
<dbReference type="eggNOG" id="arCOG04733">
    <property type="taxonomic scope" value="Archaea"/>
</dbReference>
<dbReference type="HOGENOM" id="CLU_035060_4_1_2"/>
<dbReference type="OrthoDB" id="7441at2157"/>
<dbReference type="PhylomeDB" id="Q97CM6"/>
<dbReference type="Proteomes" id="UP000001017">
    <property type="component" value="Chromosome"/>
</dbReference>
<dbReference type="GO" id="GO:0005737">
    <property type="term" value="C:cytoplasm"/>
    <property type="evidence" value="ECO:0007669"/>
    <property type="project" value="UniProtKB-SubCell"/>
</dbReference>
<dbReference type="GO" id="GO:0106388">
    <property type="term" value="F:18S rRNA aminocarboxypropyltransferase activity"/>
    <property type="evidence" value="ECO:0007669"/>
    <property type="project" value="InterPro"/>
</dbReference>
<dbReference type="GO" id="GO:1904047">
    <property type="term" value="F:S-adenosyl-L-methionine binding"/>
    <property type="evidence" value="ECO:0007669"/>
    <property type="project" value="UniProtKB-UniRule"/>
</dbReference>
<dbReference type="GO" id="GO:0000455">
    <property type="term" value="P:enzyme-directed rRNA pseudouridine synthesis"/>
    <property type="evidence" value="ECO:0007669"/>
    <property type="project" value="UniProtKB-UniRule"/>
</dbReference>
<dbReference type="HAMAP" id="MF_01116">
    <property type="entry name" value="TSR3"/>
    <property type="match status" value="1"/>
</dbReference>
<dbReference type="InterPro" id="IPR022968">
    <property type="entry name" value="Tsr3-like"/>
</dbReference>
<dbReference type="InterPro" id="IPR007177">
    <property type="entry name" value="Tsr3_C"/>
</dbReference>
<dbReference type="NCBIfam" id="NF002621">
    <property type="entry name" value="PRK02287.1"/>
    <property type="match status" value="1"/>
</dbReference>
<dbReference type="PANTHER" id="PTHR20426:SF0">
    <property type="entry name" value="18S RRNA AMINOCARBOXYPROPYLTRANSFERASE"/>
    <property type="match status" value="1"/>
</dbReference>
<dbReference type="PANTHER" id="PTHR20426">
    <property type="entry name" value="RIBOSOME BIOGENESIS PROTEIN TSR3 HOMOLOG"/>
    <property type="match status" value="1"/>
</dbReference>
<dbReference type="Pfam" id="PF04034">
    <property type="entry name" value="Ribo_biogen_C"/>
    <property type="match status" value="1"/>
</dbReference>
<organism>
    <name type="scientific">Thermoplasma volcanium (strain ATCC 51530 / DSM 4299 / JCM 9571 / NBRC 15438 / GSS1)</name>
    <dbReference type="NCBI Taxonomy" id="273116"/>
    <lineage>
        <taxon>Archaea</taxon>
        <taxon>Methanobacteriati</taxon>
        <taxon>Thermoplasmatota</taxon>
        <taxon>Thermoplasmata</taxon>
        <taxon>Thermoplasmatales</taxon>
        <taxon>Thermoplasmataceae</taxon>
        <taxon>Thermoplasma</taxon>
    </lineage>
</organism>
<comment type="function">
    <text evidence="2">Aminocarboxypropyltransferase that catalyzes the aminocarboxypropyl transfer on pseudouridine corresponding to position 914 in M.jannaschii 16S rRNA. It constitutes the last step in biosynthesis of the hypermodified N1-methyl-N3-(3-amino-3-carboxypropyl) pseudouridine (m1acp3-Psi).</text>
</comment>
<comment type="catalytic activity">
    <reaction evidence="2">
        <text>an N(1)-methylpseudouridine in rRNA + S-adenosyl-L-methionine = N(1)-methyl-N(3)-[(3S)-3-amino-3-carboxypropyl]pseudouridine in rRNA + S-methyl-5'-thioadenosine + H(+)</text>
        <dbReference type="Rhea" id="RHEA:63296"/>
        <dbReference type="Rhea" id="RHEA-COMP:11634"/>
        <dbReference type="Rhea" id="RHEA-COMP:16310"/>
        <dbReference type="ChEBI" id="CHEBI:15378"/>
        <dbReference type="ChEBI" id="CHEBI:17509"/>
        <dbReference type="ChEBI" id="CHEBI:59789"/>
        <dbReference type="ChEBI" id="CHEBI:74890"/>
        <dbReference type="ChEBI" id="CHEBI:146234"/>
        <dbReference type="EC" id="2.5.1.157"/>
    </reaction>
</comment>
<comment type="subcellular location">
    <subcellularLocation>
        <location evidence="2">Cytoplasm</location>
    </subcellularLocation>
</comment>
<comment type="similarity">
    <text evidence="2">Belongs to the TDD superfamily. TSR3 family.</text>
</comment>
<accession>Q97CM6</accession>
<feature type="chain" id="PRO_0000094425" description="16S rRNA aminocarboxypropyltransferase">
    <location>
        <begin position="1"/>
        <end position="164"/>
    </location>
</feature>
<feature type="binding site" evidence="1 2">
    <location>
        <position position="18"/>
    </location>
    <ligand>
        <name>S-adenosyl-L-methionine</name>
        <dbReference type="ChEBI" id="CHEBI:59789"/>
    </ligand>
</feature>
<feature type="binding site" evidence="1 2">
    <location>
        <position position="66"/>
    </location>
    <ligand>
        <name>S-adenosyl-L-methionine</name>
        <dbReference type="ChEBI" id="CHEBI:59789"/>
    </ligand>
</feature>
<feature type="binding site" evidence="1 2">
    <location>
        <position position="87"/>
    </location>
    <ligand>
        <name>S-adenosyl-L-methionine</name>
        <dbReference type="ChEBI" id="CHEBI:59789"/>
    </ligand>
</feature>
<feature type="binding site" evidence="2">
    <location>
        <position position="106"/>
    </location>
    <ligand>
        <name>S-adenosyl-L-methionine</name>
        <dbReference type="ChEBI" id="CHEBI:59789"/>
    </ligand>
</feature>
<protein>
    <recommendedName>
        <fullName evidence="2 3">16S rRNA aminocarboxypropyltransferase</fullName>
        <ecNumber evidence="2">2.5.1.157</ecNumber>
    </recommendedName>
</protein>
<reference key="1">
    <citation type="journal article" date="2000" name="Proc. Natl. Acad. Sci. U.S.A.">
        <title>Archaeal adaptation to higher temperatures revealed by genomic sequence of Thermoplasma volcanium.</title>
        <authorList>
            <person name="Kawashima T."/>
            <person name="Amano N."/>
            <person name="Koike H."/>
            <person name="Makino S."/>
            <person name="Higuchi S."/>
            <person name="Kawashima-Ohya Y."/>
            <person name="Watanabe K."/>
            <person name="Yamazaki M."/>
            <person name="Kanehori K."/>
            <person name="Kawamoto T."/>
            <person name="Nunoshiba T."/>
            <person name="Yamamoto Y."/>
            <person name="Aramaki H."/>
            <person name="Makino K."/>
            <person name="Suzuki M."/>
        </authorList>
    </citation>
    <scope>NUCLEOTIDE SEQUENCE [LARGE SCALE GENOMIC DNA]</scope>
    <source>
        <strain>ATCC 51530 / DSM 4299 / JCM 9571 / NBRC 15438 / GSS1</strain>
    </source>
</reference>
<gene>
    <name type="ordered locus">TV0075</name>
    <name type="ORF">TVG0075867</name>
</gene>
<keyword id="KW-0963">Cytoplasm</keyword>
<keyword id="KW-0690">Ribosome biogenesis</keyword>
<keyword id="KW-0698">rRNA processing</keyword>
<keyword id="KW-0949">S-adenosyl-L-methionine</keyword>
<keyword id="KW-0808">Transferase</keyword>